<gene>
    <name evidence="1" type="primary">STX17</name>
</gene>
<sequence>MSEDEEKVKLRRLEPAIQKFTKIVIPTDLERLRKHQINIEKYQRCRVWDKLHEEHINAGRTVQQLRSNIREMEKLCLKVRKDDLGLLKRMIDPVKEEASAATAEFLQLHLESVEELKKQFNDEETFLQPSLTRSMTVGGTFHSTEDEADPQSMTQIYALPEIPRDQNAAESWETLEADLIELSQLVTDFSLLVNSQQEKIDSIEDHVNTAAVNVEEGTKNLGKAAKYKLAALPVAGALIGGVVGGPIGLLAGFKVAGIAAALGGGVLGFTGGKLIQRRKQKMMEKLASSCPDLPSQTDKKCS</sequence>
<reference key="1">
    <citation type="journal article" date="2005" name="BMC Genomics">
        <title>Characterization of 954 bovine full-CDS cDNA sequences.</title>
        <authorList>
            <person name="Harhay G.P."/>
            <person name="Sonstegard T.S."/>
            <person name="Keele J.W."/>
            <person name="Heaton M.P."/>
            <person name="Clawson M.L."/>
            <person name="Snelling W.M."/>
            <person name="Wiedmann R.T."/>
            <person name="Van Tassell C.P."/>
            <person name="Smith T.P.L."/>
        </authorList>
    </citation>
    <scope>NUCLEOTIDE SEQUENCE [LARGE SCALE MRNA]</scope>
</reference>
<reference key="2">
    <citation type="submission" date="2006-09" db="EMBL/GenBank/DDBJ databases">
        <authorList>
            <consortium name="NIH - Mammalian Gene Collection (MGC) project"/>
        </authorList>
    </citation>
    <scope>NUCLEOTIDE SEQUENCE [LARGE SCALE MRNA]</scope>
    <source>
        <strain>Hereford</strain>
        <tissue>Fetal skin</tissue>
    </source>
</reference>
<dbReference type="EMBL" id="BT020788">
    <property type="protein sequence ID" value="AAX08805.1"/>
    <property type="molecule type" value="mRNA"/>
</dbReference>
<dbReference type="EMBL" id="BC123853">
    <property type="protein sequence ID" value="AAI23854.1"/>
    <property type="molecule type" value="mRNA"/>
</dbReference>
<dbReference type="RefSeq" id="NP_001029778.1">
    <property type="nucleotide sequence ID" value="NM_001034606.1"/>
</dbReference>
<dbReference type="RefSeq" id="XP_005210267.1">
    <property type="nucleotide sequence ID" value="XM_005210210.5"/>
</dbReference>
<dbReference type="RefSeq" id="XP_005210268.1">
    <property type="nucleotide sequence ID" value="XM_005210211.5"/>
</dbReference>
<dbReference type="RefSeq" id="XP_005210269.1">
    <property type="nucleotide sequence ID" value="XM_005210212.5"/>
</dbReference>
<dbReference type="SMR" id="Q5E9Y2"/>
<dbReference type="FunCoup" id="Q5E9Y2">
    <property type="interactions" value="2450"/>
</dbReference>
<dbReference type="STRING" id="9913.ENSBTAP00000010541"/>
<dbReference type="PaxDb" id="9913-ENSBTAP00000010541"/>
<dbReference type="Ensembl" id="ENSBTAT00000010541.7">
    <property type="protein sequence ID" value="ENSBTAP00000010541.5"/>
    <property type="gene ID" value="ENSBTAG00000008016.7"/>
</dbReference>
<dbReference type="GeneID" id="534304"/>
<dbReference type="KEGG" id="bta:534304"/>
<dbReference type="CTD" id="55014"/>
<dbReference type="VEuPathDB" id="HostDB:ENSBTAG00000008016"/>
<dbReference type="VGNC" id="VGNC:35433">
    <property type="gene designation" value="STX17"/>
</dbReference>
<dbReference type="eggNOG" id="KOG0811">
    <property type="taxonomic scope" value="Eukaryota"/>
</dbReference>
<dbReference type="GeneTree" id="ENSGT01000000214440"/>
<dbReference type="HOGENOM" id="CLU_058244_1_0_1"/>
<dbReference type="InParanoid" id="Q5E9Y2"/>
<dbReference type="OMA" id="YPVMGAL"/>
<dbReference type="OrthoDB" id="10035606at2759"/>
<dbReference type="TreeFam" id="TF323947"/>
<dbReference type="Reactome" id="R-BTA-204005">
    <property type="pathway name" value="COPII-mediated vesicle transport"/>
</dbReference>
<dbReference type="Proteomes" id="UP000009136">
    <property type="component" value="Chromosome 8"/>
</dbReference>
<dbReference type="Bgee" id="ENSBTAG00000008016">
    <property type="expression patterns" value="Expressed in oocyte and 106 other cell types or tissues"/>
</dbReference>
<dbReference type="GO" id="GO:0120281">
    <property type="term" value="C:autolysosome membrane"/>
    <property type="evidence" value="ECO:0000250"/>
    <property type="project" value="UniProtKB"/>
</dbReference>
<dbReference type="GO" id="GO:0005776">
    <property type="term" value="C:autophagosome"/>
    <property type="evidence" value="ECO:0000250"/>
    <property type="project" value="UniProtKB"/>
</dbReference>
<dbReference type="GO" id="GO:0000421">
    <property type="term" value="C:autophagosome membrane"/>
    <property type="evidence" value="ECO:0000250"/>
    <property type="project" value="UniProtKB"/>
</dbReference>
<dbReference type="GO" id="GO:0030134">
    <property type="term" value="C:COPII-coated ER to Golgi transport vesicle"/>
    <property type="evidence" value="ECO:0000250"/>
    <property type="project" value="UniProtKB"/>
</dbReference>
<dbReference type="GO" id="GO:0005829">
    <property type="term" value="C:cytosol"/>
    <property type="evidence" value="ECO:0000250"/>
    <property type="project" value="UniProtKB"/>
</dbReference>
<dbReference type="GO" id="GO:0012505">
    <property type="term" value="C:endomembrane system"/>
    <property type="evidence" value="ECO:0000318"/>
    <property type="project" value="GO_Central"/>
</dbReference>
<dbReference type="GO" id="GO:0005789">
    <property type="term" value="C:endoplasmic reticulum membrane"/>
    <property type="evidence" value="ECO:0000250"/>
    <property type="project" value="UniProtKB"/>
</dbReference>
<dbReference type="GO" id="GO:0005793">
    <property type="term" value="C:endoplasmic reticulum-Golgi intermediate compartment"/>
    <property type="evidence" value="ECO:0000250"/>
    <property type="project" value="UniProtKB"/>
</dbReference>
<dbReference type="GO" id="GO:0033116">
    <property type="term" value="C:endoplasmic reticulum-Golgi intermediate compartment membrane"/>
    <property type="evidence" value="ECO:0007669"/>
    <property type="project" value="UniProtKB-SubCell"/>
</dbReference>
<dbReference type="GO" id="GO:0012507">
    <property type="term" value="C:ER to Golgi transport vesicle membrane"/>
    <property type="evidence" value="ECO:0007669"/>
    <property type="project" value="UniProtKB-SubCell"/>
</dbReference>
<dbReference type="GO" id="GO:0030897">
    <property type="term" value="C:HOPS complex"/>
    <property type="evidence" value="ECO:0007669"/>
    <property type="project" value="Ensembl"/>
</dbReference>
<dbReference type="GO" id="GO:0044233">
    <property type="term" value="C:mitochondria-associated endoplasmic reticulum membrane contact site"/>
    <property type="evidence" value="ECO:0007669"/>
    <property type="project" value="Ensembl"/>
</dbReference>
<dbReference type="GO" id="GO:0031966">
    <property type="term" value="C:mitochondrial membrane"/>
    <property type="evidence" value="ECO:0007669"/>
    <property type="project" value="UniProtKB-SubCell"/>
</dbReference>
<dbReference type="GO" id="GO:0005739">
    <property type="term" value="C:mitochondrion"/>
    <property type="evidence" value="ECO:0000250"/>
    <property type="project" value="UniProtKB"/>
</dbReference>
<dbReference type="GO" id="GO:0005886">
    <property type="term" value="C:plasma membrane"/>
    <property type="evidence" value="ECO:0000318"/>
    <property type="project" value="GO_Central"/>
</dbReference>
<dbReference type="GO" id="GO:0030868">
    <property type="term" value="C:smooth endoplasmic reticulum membrane"/>
    <property type="evidence" value="ECO:0000250"/>
    <property type="project" value="UniProtKB"/>
</dbReference>
<dbReference type="GO" id="GO:0031201">
    <property type="term" value="C:SNARE complex"/>
    <property type="evidence" value="ECO:0000250"/>
    <property type="project" value="UniProtKB"/>
</dbReference>
<dbReference type="GO" id="GO:0019903">
    <property type="term" value="F:protein phosphatase binding"/>
    <property type="evidence" value="ECO:0007669"/>
    <property type="project" value="Ensembl"/>
</dbReference>
<dbReference type="GO" id="GO:0005484">
    <property type="term" value="F:SNAP receptor activity"/>
    <property type="evidence" value="ECO:0000250"/>
    <property type="project" value="UniProtKB"/>
</dbReference>
<dbReference type="GO" id="GO:0000149">
    <property type="term" value="F:SNARE binding"/>
    <property type="evidence" value="ECO:0000250"/>
    <property type="project" value="UniProtKB"/>
</dbReference>
<dbReference type="GO" id="GO:0097352">
    <property type="term" value="P:autophagosome maturation"/>
    <property type="evidence" value="ECO:0000250"/>
    <property type="project" value="UniProtKB"/>
</dbReference>
<dbReference type="GO" id="GO:0016240">
    <property type="term" value="P:autophagosome membrane docking"/>
    <property type="evidence" value="ECO:0007669"/>
    <property type="project" value="Ensembl"/>
</dbReference>
<dbReference type="GO" id="GO:0061909">
    <property type="term" value="P:autophagosome-lysosome fusion"/>
    <property type="evidence" value="ECO:0000250"/>
    <property type="project" value="UniProtKB"/>
</dbReference>
<dbReference type="GO" id="GO:0006888">
    <property type="term" value="P:endoplasmic reticulum to Golgi vesicle-mediated transport"/>
    <property type="evidence" value="ECO:0000250"/>
    <property type="project" value="UniProtKB"/>
</dbReference>
<dbReference type="GO" id="GO:0097111">
    <property type="term" value="P:endoplasmic reticulum-Golgi intermediate compartment organization"/>
    <property type="evidence" value="ECO:0000250"/>
    <property type="project" value="UniProtKB"/>
</dbReference>
<dbReference type="GO" id="GO:0006887">
    <property type="term" value="P:exocytosis"/>
    <property type="evidence" value="ECO:0000318"/>
    <property type="project" value="GO_Central"/>
</dbReference>
<dbReference type="GO" id="GO:0007030">
    <property type="term" value="P:Golgi organization"/>
    <property type="evidence" value="ECO:0000250"/>
    <property type="project" value="UniProtKB"/>
</dbReference>
<dbReference type="GO" id="GO:0006886">
    <property type="term" value="P:intracellular protein transport"/>
    <property type="evidence" value="ECO:0000318"/>
    <property type="project" value="GO_Central"/>
</dbReference>
<dbReference type="GO" id="GO:0034497">
    <property type="term" value="P:protein localization to phagophore assembly site"/>
    <property type="evidence" value="ECO:0007669"/>
    <property type="project" value="Ensembl"/>
</dbReference>
<dbReference type="GO" id="GO:0048278">
    <property type="term" value="P:vesicle docking"/>
    <property type="evidence" value="ECO:0000318"/>
    <property type="project" value="GO_Central"/>
</dbReference>
<dbReference type="GO" id="GO:0006906">
    <property type="term" value="P:vesicle fusion"/>
    <property type="evidence" value="ECO:0000318"/>
    <property type="project" value="GO_Central"/>
</dbReference>
<dbReference type="CDD" id="cd15846">
    <property type="entry name" value="SNARE_syntaxin17"/>
    <property type="match status" value="1"/>
</dbReference>
<dbReference type="FunFam" id="1.20.5.110:FF:000046">
    <property type="entry name" value="syntaxin-17 isoform X1"/>
    <property type="match status" value="1"/>
</dbReference>
<dbReference type="Gene3D" id="1.20.5.110">
    <property type="match status" value="1"/>
</dbReference>
<dbReference type="InterPro" id="IPR010989">
    <property type="entry name" value="SNARE"/>
</dbReference>
<dbReference type="InterPro" id="IPR028676">
    <property type="entry name" value="STX17_SNARE"/>
</dbReference>
<dbReference type="InterPro" id="IPR045242">
    <property type="entry name" value="Syntaxin"/>
</dbReference>
<dbReference type="InterPro" id="IPR006012">
    <property type="entry name" value="Syntaxin/epimorphin_CS"/>
</dbReference>
<dbReference type="InterPro" id="IPR000727">
    <property type="entry name" value="T_SNARE_dom"/>
</dbReference>
<dbReference type="PANTHER" id="PTHR19957">
    <property type="entry name" value="SYNTAXIN"/>
    <property type="match status" value="1"/>
</dbReference>
<dbReference type="PANTHER" id="PTHR19957:SF139">
    <property type="entry name" value="SYNTAXIN-17"/>
    <property type="match status" value="1"/>
</dbReference>
<dbReference type="SMART" id="SM00397">
    <property type="entry name" value="t_SNARE"/>
    <property type="match status" value="1"/>
</dbReference>
<dbReference type="SUPFAM" id="SSF47661">
    <property type="entry name" value="t-snare proteins"/>
    <property type="match status" value="1"/>
</dbReference>
<dbReference type="PROSITE" id="PS00914">
    <property type="entry name" value="SYNTAXIN"/>
    <property type="match status" value="1"/>
</dbReference>
<dbReference type="PROSITE" id="PS50192">
    <property type="entry name" value="T_SNARE"/>
    <property type="match status" value="1"/>
</dbReference>
<accession>Q5E9Y2</accession>
<proteinExistence type="evidence at transcript level"/>
<feature type="initiator methionine" description="Removed" evidence="1">
    <location>
        <position position="1"/>
    </location>
</feature>
<feature type="chain" id="PRO_0000282600" description="Syntaxin-17">
    <location>
        <begin position="2"/>
        <end position="302"/>
    </location>
</feature>
<feature type="topological domain" description="Cytoplasmic" evidence="3">
    <location>
        <begin position="2"/>
        <end position="228"/>
    </location>
</feature>
<feature type="transmembrane region" description="Helical" evidence="3">
    <location>
        <begin position="229"/>
        <end position="249"/>
    </location>
</feature>
<feature type="topological domain" description="Lumenal" evidence="3">
    <location>
        <begin position="250"/>
        <end position="254"/>
    </location>
</feature>
<feature type="transmembrane region" description="Helical" evidence="3">
    <location>
        <begin position="255"/>
        <end position="275"/>
    </location>
</feature>
<feature type="topological domain" description="Cytoplasmic" evidence="3">
    <location>
        <begin position="276"/>
        <end position="302"/>
    </location>
</feature>
<feature type="domain" description="t-SNARE coiled-coil homology" evidence="4">
    <location>
        <begin position="162"/>
        <end position="224"/>
    </location>
</feature>
<feature type="region of interest" description="Necessary and sufficient for localization to autophagosome" evidence="1">
    <location>
        <begin position="229"/>
        <end position="275"/>
    </location>
</feature>
<feature type="coiled-coil region" evidence="3">
    <location>
        <begin position="53"/>
        <end position="123"/>
    </location>
</feature>
<feature type="short sequence motif" description="Endoplasmic reticulum retention signal" evidence="3">
    <location>
        <begin position="299"/>
        <end position="302"/>
    </location>
</feature>
<feature type="modified residue" description="N-acetylserine" evidence="1">
    <location>
        <position position="2"/>
    </location>
</feature>
<feature type="modified residue" description="N6-acetyllysine" evidence="1">
    <location>
        <position position="41"/>
    </location>
</feature>
<feature type="modified residue" description="Phosphotyrosine; by ABL1" evidence="2">
    <location>
        <position position="157"/>
    </location>
</feature>
<feature type="modified residue" description="Phosphoserine" evidence="1">
    <location>
        <position position="289"/>
    </location>
</feature>
<protein>
    <recommendedName>
        <fullName evidence="1">Syntaxin-17</fullName>
    </recommendedName>
</protein>
<comment type="function">
    <text evidence="1">SNAREs, soluble N-ethylmaleimide-sensitive factor-attachment protein receptors, are essential proteins for fusion of cellular membranes. SNAREs localized on opposing membranes assemble to form a trans-SNARE complex, an extended, parallel four alpha-helical bundle that drives membrane fusion. STX17 is a SNARE of the autophagosome involved in autophagy through the direct control of autophagosome membrane fusion with the lysosome membrane. May also play a role in the early secretory pathway where it may maintain the architecture of the endoplasmic reticulum-Golgi intermediate compartment/ERGIC and Golgi and/or regulate transport between the endoplasmic reticulum, the ERGIC and the Golgi (By similarity).</text>
</comment>
<comment type="subunit">
    <text evidence="1 2">Forms a SNARE complex composed of VAMP8, SNAP29 and STX17 involved in fusion of autophagosome with lysosome (By similarity). May interact with VTI1B (By similarity). Probably interacts with BET1, SCFD1 and SEC22B (By similarity). Interacts with PTPN2 and ABL1; involved in STX17 phosphorylation (By similarity). Interacts with COPB1 (By similarity). Interacts with TMED9 and TMED10; the interaction is direct (By similarity). Interacts with VAMP7 (By similarity). Interacts with RUBCNL/PACER; promoting targeting of RUBCNL/PACER to autophagosome (By similarity). Interacts with VAMP8, SNAP29, VPS39 and VPS41; these interactions are increased in the absence of TMEM39A (By similarity). Interacts with IRGM; promoting STX17 recruitment to autophagosomes (By similarity). Interacts with ATG8 proteins GABARAP and MAP1LC3B (By similarity). Interacts with RNF115; this interaction enhances STX17 stability which in turn promotes autophagosome maturation (By similarity). Interacts with RAB39A (GTP-bound); the interaction promotes autophagosome-lysosome membrane fusion driven by STX17-SNAP29-VAMP8 (By similarity). Interacts with RAB39B; the interaction may promote a different fonction in autophagy as compared with RAB39A (By similarity).</text>
</comment>
<comment type="subcellular location">
    <subcellularLocation>
        <location evidence="1">Endoplasmic reticulum membrane</location>
        <topology evidence="3">Multi-pass membrane protein</topology>
    </subcellularLocation>
    <subcellularLocation>
        <location evidence="2">Smooth endoplasmic reticulum membrane</location>
        <topology evidence="3">Multi-pass membrane protein</topology>
    </subcellularLocation>
    <subcellularLocation>
        <location evidence="1">Endoplasmic reticulum-Golgi intermediate compartment membrane</location>
        <topology evidence="3">Multi-pass membrane protein</topology>
    </subcellularLocation>
    <subcellularLocation>
        <location evidence="1">Cytoplasmic vesicle</location>
        <location evidence="1">Autophagosome membrane</location>
        <topology evidence="3">Multi-pass membrane protein</topology>
    </subcellularLocation>
    <subcellularLocation>
        <location evidence="2">Cytoplasmic vesicle</location>
        <location evidence="2">COPII-coated vesicle membrane</location>
        <topology evidence="3">Multi-pass membrane protein</topology>
    </subcellularLocation>
    <subcellularLocation>
        <location evidence="2">Cytoplasm</location>
        <location evidence="2">Cytosol</location>
    </subcellularLocation>
    <subcellularLocation>
        <location evidence="1">Mitochondrion membrane</location>
        <topology evidence="3">Multi-pass membrane protein</topology>
    </subcellularLocation>
    <subcellularLocation>
        <location evidence="1">Autolysosome membrane</location>
        <topology evidence="3">Multi-pass membrane protein</topology>
    </subcellularLocation>
    <text evidence="1">Has a hairpin-like insertion into membranes. Localizes to the completed autophagosome membrane upon cell starvation. Colocalized with RAB39A and RAB39B in autolysosomes in autophagy-induced conditions (By similarity).</text>
</comment>
<comment type="PTM">
    <text evidence="2">Phosphorylated at Tyr-157 probably by ABL1. Dephosphorylation by PTPN2; regulates exit from the endoplasmic reticulum (By similarity).</text>
</comment>
<comment type="similarity">
    <text evidence="5">Belongs to the syntaxin family.</text>
</comment>
<organism>
    <name type="scientific">Bos taurus</name>
    <name type="common">Bovine</name>
    <dbReference type="NCBI Taxonomy" id="9913"/>
    <lineage>
        <taxon>Eukaryota</taxon>
        <taxon>Metazoa</taxon>
        <taxon>Chordata</taxon>
        <taxon>Craniata</taxon>
        <taxon>Vertebrata</taxon>
        <taxon>Euteleostomi</taxon>
        <taxon>Mammalia</taxon>
        <taxon>Eutheria</taxon>
        <taxon>Laurasiatheria</taxon>
        <taxon>Artiodactyla</taxon>
        <taxon>Ruminantia</taxon>
        <taxon>Pecora</taxon>
        <taxon>Bovidae</taxon>
        <taxon>Bovinae</taxon>
        <taxon>Bos</taxon>
    </lineage>
</organism>
<name>STX17_BOVIN</name>
<keyword id="KW-0007">Acetylation</keyword>
<keyword id="KW-0072">Autophagy</keyword>
<keyword id="KW-0175">Coiled coil</keyword>
<keyword id="KW-0963">Cytoplasm</keyword>
<keyword id="KW-0968">Cytoplasmic vesicle</keyword>
<keyword id="KW-0256">Endoplasmic reticulum</keyword>
<keyword id="KW-0931">ER-Golgi transport</keyword>
<keyword id="KW-0458">Lysosome</keyword>
<keyword id="KW-0472">Membrane</keyword>
<keyword id="KW-0496">Mitochondrion</keyword>
<keyword id="KW-0597">Phosphoprotein</keyword>
<keyword id="KW-1185">Reference proteome</keyword>
<keyword id="KW-0812">Transmembrane</keyword>
<keyword id="KW-1133">Transmembrane helix</keyword>
<keyword id="KW-0813">Transport</keyword>
<evidence type="ECO:0000250" key="1">
    <source>
        <dbReference type="UniProtKB" id="P56962"/>
    </source>
</evidence>
<evidence type="ECO:0000250" key="2">
    <source>
        <dbReference type="UniProtKB" id="Q9Z158"/>
    </source>
</evidence>
<evidence type="ECO:0000255" key="3"/>
<evidence type="ECO:0000255" key="4">
    <source>
        <dbReference type="PROSITE-ProRule" id="PRU00202"/>
    </source>
</evidence>
<evidence type="ECO:0000305" key="5"/>